<dbReference type="EMBL" id="AL111168">
    <property type="protein sequence ID" value="CAL34625.1"/>
    <property type="molecule type" value="Genomic_DNA"/>
</dbReference>
<dbReference type="PIR" id="H81392">
    <property type="entry name" value="H81392"/>
</dbReference>
<dbReference type="RefSeq" id="WP_002858569.1">
    <property type="nucleotide sequence ID" value="NZ_SZUC01000002.1"/>
</dbReference>
<dbReference type="RefSeq" id="YP_002343911.1">
    <property type="nucleotide sequence ID" value="NC_002163.1"/>
</dbReference>
<dbReference type="SMR" id="Q9PI32"/>
<dbReference type="IntAct" id="Q9PI32">
    <property type="interactions" value="57"/>
</dbReference>
<dbReference type="STRING" id="192222.Cj0477"/>
<dbReference type="PaxDb" id="192222-Cj0477"/>
<dbReference type="EnsemblBacteria" id="CAL34625">
    <property type="protein sequence ID" value="CAL34625"/>
    <property type="gene ID" value="Cj0477"/>
</dbReference>
<dbReference type="GeneID" id="904805"/>
<dbReference type="KEGG" id="cje:Cj0477"/>
<dbReference type="PATRIC" id="fig|192222.6.peg.469"/>
<dbReference type="eggNOG" id="COG0222">
    <property type="taxonomic scope" value="Bacteria"/>
</dbReference>
<dbReference type="HOGENOM" id="CLU_086499_3_0_7"/>
<dbReference type="OrthoDB" id="9811748at2"/>
<dbReference type="Proteomes" id="UP000000799">
    <property type="component" value="Chromosome"/>
</dbReference>
<dbReference type="GO" id="GO:0022625">
    <property type="term" value="C:cytosolic large ribosomal subunit"/>
    <property type="evidence" value="ECO:0007669"/>
    <property type="project" value="TreeGrafter"/>
</dbReference>
<dbReference type="GO" id="GO:0003729">
    <property type="term" value="F:mRNA binding"/>
    <property type="evidence" value="ECO:0007669"/>
    <property type="project" value="TreeGrafter"/>
</dbReference>
<dbReference type="GO" id="GO:0003735">
    <property type="term" value="F:structural constituent of ribosome"/>
    <property type="evidence" value="ECO:0007669"/>
    <property type="project" value="InterPro"/>
</dbReference>
<dbReference type="GO" id="GO:0006412">
    <property type="term" value="P:translation"/>
    <property type="evidence" value="ECO:0007669"/>
    <property type="project" value="UniProtKB-UniRule"/>
</dbReference>
<dbReference type="CDD" id="cd00387">
    <property type="entry name" value="Ribosomal_L7_L12"/>
    <property type="match status" value="1"/>
</dbReference>
<dbReference type="FunFam" id="3.30.1390.10:FF:000001">
    <property type="entry name" value="50S ribosomal protein L7/L12"/>
    <property type="match status" value="1"/>
</dbReference>
<dbReference type="Gene3D" id="3.30.1390.10">
    <property type="match status" value="1"/>
</dbReference>
<dbReference type="Gene3D" id="1.20.5.710">
    <property type="entry name" value="Single helix bin"/>
    <property type="match status" value="1"/>
</dbReference>
<dbReference type="HAMAP" id="MF_00368">
    <property type="entry name" value="Ribosomal_bL12"/>
    <property type="match status" value="1"/>
</dbReference>
<dbReference type="InterPro" id="IPR000206">
    <property type="entry name" value="Ribosomal_bL12"/>
</dbReference>
<dbReference type="InterPro" id="IPR013823">
    <property type="entry name" value="Ribosomal_bL12_C"/>
</dbReference>
<dbReference type="InterPro" id="IPR014719">
    <property type="entry name" value="Ribosomal_bL12_C/ClpS-like"/>
</dbReference>
<dbReference type="InterPro" id="IPR008932">
    <property type="entry name" value="Ribosomal_bL12_oligo"/>
</dbReference>
<dbReference type="InterPro" id="IPR036235">
    <property type="entry name" value="Ribosomal_bL12_oligo_N_sf"/>
</dbReference>
<dbReference type="NCBIfam" id="TIGR00855">
    <property type="entry name" value="L12"/>
    <property type="match status" value="1"/>
</dbReference>
<dbReference type="PANTHER" id="PTHR45987">
    <property type="entry name" value="39S RIBOSOMAL PROTEIN L12"/>
    <property type="match status" value="1"/>
</dbReference>
<dbReference type="PANTHER" id="PTHR45987:SF4">
    <property type="entry name" value="LARGE RIBOSOMAL SUBUNIT PROTEIN BL12M"/>
    <property type="match status" value="1"/>
</dbReference>
<dbReference type="Pfam" id="PF00542">
    <property type="entry name" value="Ribosomal_L12"/>
    <property type="match status" value="1"/>
</dbReference>
<dbReference type="Pfam" id="PF16320">
    <property type="entry name" value="Ribosomal_L12_N"/>
    <property type="match status" value="1"/>
</dbReference>
<dbReference type="SUPFAM" id="SSF54736">
    <property type="entry name" value="ClpS-like"/>
    <property type="match status" value="1"/>
</dbReference>
<dbReference type="SUPFAM" id="SSF48300">
    <property type="entry name" value="Ribosomal protein L7/12, oligomerisation (N-terminal) domain"/>
    <property type="match status" value="1"/>
</dbReference>
<gene>
    <name evidence="1" type="primary">rplL</name>
    <name type="ordered locus">Cj0477</name>
</gene>
<proteinExistence type="inferred from homology"/>
<comment type="function">
    <text evidence="1">Forms part of the ribosomal stalk which helps the ribosome interact with GTP-bound translation factors. Is thus essential for accurate translation.</text>
</comment>
<comment type="subunit">
    <text evidence="1">Homodimer. Part of the ribosomal stalk of the 50S ribosomal subunit. Forms a multimeric L10(L12)X complex, where L10 forms an elongated spine to which 2 to 4 L12 dimers bind in a sequential fashion. Binds GTP-bound translation factors.</text>
</comment>
<comment type="similarity">
    <text evidence="1">Belongs to the bacterial ribosomal protein bL12 family.</text>
</comment>
<organism>
    <name type="scientific">Campylobacter jejuni subsp. jejuni serotype O:2 (strain ATCC 700819 / NCTC 11168)</name>
    <dbReference type="NCBI Taxonomy" id="192222"/>
    <lineage>
        <taxon>Bacteria</taxon>
        <taxon>Pseudomonadati</taxon>
        <taxon>Campylobacterota</taxon>
        <taxon>Epsilonproteobacteria</taxon>
        <taxon>Campylobacterales</taxon>
        <taxon>Campylobacteraceae</taxon>
        <taxon>Campylobacter</taxon>
    </lineage>
</organism>
<keyword id="KW-1185">Reference proteome</keyword>
<keyword id="KW-0687">Ribonucleoprotein</keyword>
<keyword id="KW-0689">Ribosomal protein</keyword>
<name>RL7_CAMJE</name>
<protein>
    <recommendedName>
        <fullName evidence="1">Large ribosomal subunit protein bL12</fullName>
    </recommendedName>
    <alternativeName>
        <fullName evidence="2">50S ribosomal protein L7/L12</fullName>
    </alternativeName>
</protein>
<evidence type="ECO:0000255" key="1">
    <source>
        <dbReference type="HAMAP-Rule" id="MF_00368"/>
    </source>
</evidence>
<evidence type="ECO:0000305" key="2"/>
<reference key="1">
    <citation type="journal article" date="2000" name="Nature">
        <title>The genome sequence of the food-borne pathogen Campylobacter jejuni reveals hypervariable sequences.</title>
        <authorList>
            <person name="Parkhill J."/>
            <person name="Wren B.W."/>
            <person name="Mungall K.L."/>
            <person name="Ketley J.M."/>
            <person name="Churcher C.M."/>
            <person name="Basham D."/>
            <person name="Chillingworth T."/>
            <person name="Davies R.M."/>
            <person name="Feltwell T."/>
            <person name="Holroyd S."/>
            <person name="Jagels K."/>
            <person name="Karlyshev A.V."/>
            <person name="Moule S."/>
            <person name="Pallen M.J."/>
            <person name="Penn C.W."/>
            <person name="Quail M.A."/>
            <person name="Rajandream M.A."/>
            <person name="Rutherford K.M."/>
            <person name="van Vliet A.H.M."/>
            <person name="Whitehead S."/>
            <person name="Barrell B.G."/>
        </authorList>
    </citation>
    <scope>NUCLEOTIDE SEQUENCE [LARGE SCALE GENOMIC DNA]</scope>
    <source>
        <strain>ATCC 700819 / NCTC 11168</strain>
    </source>
</reference>
<feature type="chain" id="PRO_0000157513" description="Large ribosomal subunit protein bL12">
    <location>
        <begin position="1"/>
        <end position="125"/>
    </location>
</feature>
<sequence>MAISKEDVLEYISNLSVLELSELVKEFEEKFGVSAAPVMVAGGAVAGGAVAAAEEKTEFDIVLTDGGAKKIEVIKIVRALTGLGLKEAKDAVEQTPSTLKEGVAKAEAEEAKKQLEEAGAKVELK</sequence>
<accession>Q9PI32</accession>
<accession>Q0PB36</accession>